<name>CASQ1_HUMAN</name>
<evidence type="ECO:0000250" key="1">
    <source>
        <dbReference type="UniProtKB" id="O09165"/>
    </source>
</evidence>
<evidence type="ECO:0000250" key="2">
    <source>
        <dbReference type="UniProtKB" id="P07221"/>
    </source>
</evidence>
<evidence type="ECO:0000250" key="3">
    <source>
        <dbReference type="UniProtKB" id="P19633"/>
    </source>
</evidence>
<evidence type="ECO:0000255" key="4"/>
<evidence type="ECO:0000269" key="5">
    <source>
    </source>
</evidence>
<evidence type="ECO:0000269" key="6">
    <source>
    </source>
</evidence>
<evidence type="ECO:0000269" key="7">
    <source>
    </source>
</evidence>
<evidence type="ECO:0000269" key="8">
    <source>
    </source>
</evidence>
<evidence type="ECO:0000269" key="9">
    <source>
    </source>
</evidence>
<evidence type="ECO:0000269" key="10">
    <source>
    </source>
</evidence>
<evidence type="ECO:0000303" key="11">
    <source>
    </source>
</evidence>
<evidence type="ECO:0000303" key="12">
    <source>
    </source>
</evidence>
<evidence type="ECO:0000305" key="13"/>
<evidence type="ECO:0007829" key="14">
    <source>
        <dbReference type="PDB" id="3UOM"/>
    </source>
</evidence>
<evidence type="ECO:0007829" key="15">
    <source>
        <dbReference type="PDB" id="5CRE"/>
    </source>
</evidence>
<evidence type="ECO:0007829" key="16">
    <source>
        <dbReference type="PDB" id="5CRG"/>
    </source>
</evidence>
<proteinExistence type="evidence at protein level"/>
<sequence>MSATDRMGPRAVPGLRLALLLLLVLGTPKSGVQGQEGLDFPEYDGVDRVINVNAKNYKNVFKKYEVLALLYHEPPEDDKASQRQFEMEELILELAAQVLEDKGVGFGLVDSEKDAAVAKKLGLTEVDSMYVFKGDEVIEYDGEFSADTIVEFLLDVLEDPVELIEGERELQAFENIEDEIKLIGYFKSKDSEHYKAFEDAAEEFHPYIPFFATFDSKVAKKLTLKLNEIDFYEAFMEEPVTIPDKPNSEEEIVNFVEEHRRSTLRKLKPESMYETWEDDMDGIHIVAFAEEADPDGFEFLETLKAVAQDNTENPDLSIIWIDPDDFPLLVPYWEKTFDIDLSAPQIGVVNVTDADSVWMEMDDEEDLPSAEELEDWLEDVLEGEINTEDDDDDDDD</sequence>
<organism>
    <name type="scientific">Homo sapiens</name>
    <name type="common">Human</name>
    <dbReference type="NCBI Taxonomy" id="9606"/>
    <lineage>
        <taxon>Eukaryota</taxon>
        <taxon>Metazoa</taxon>
        <taxon>Chordata</taxon>
        <taxon>Craniata</taxon>
        <taxon>Vertebrata</taxon>
        <taxon>Euteleostomi</taxon>
        <taxon>Mammalia</taxon>
        <taxon>Eutheria</taxon>
        <taxon>Euarchontoglires</taxon>
        <taxon>Primates</taxon>
        <taxon>Haplorrhini</taxon>
        <taxon>Catarrhini</taxon>
        <taxon>Hominidae</taxon>
        <taxon>Homo</taxon>
    </lineage>
</organism>
<protein>
    <recommendedName>
        <fullName>Calsequestrin-1</fullName>
    </recommendedName>
    <alternativeName>
        <fullName evidence="12">Calmitine</fullName>
    </alternativeName>
    <alternativeName>
        <fullName>Calsequestrin, skeletal muscle isoform</fullName>
    </alternativeName>
</protein>
<comment type="function">
    <text evidence="5 8 10 11">Calsequestrin is a high-capacity, moderate affinity, calcium-binding protein and thus acts as an internal calcium store in muscle (PubMed:28895244). Calcium ions are bound by clusters of acidic residues at the protein surface, often at the interface between subunits. Can bind around 80 Ca(2+) ions (PubMed:28895244). Regulates the release of lumenal Ca(2+) via the calcium release channel RYR1; this plays an important role in triggering muscle contraction. Negatively regulates store-operated Ca(2+) entry (SOCE) activity (PubMed:27185316).</text>
</comment>
<comment type="subunit">
    <text evidence="2 5 7 8 10">Monomer; increases in response to a depletion of intracellular calcium (PubMed:26136523, PubMed:27185316). Homodimer (PubMed:26136523, PubMed:27185316, PubMed:28895244). Homotetramer and homopolymer. Can form linear homooligomers. Ca(2+) ions promote oligomerization. Interacts (via C-terminal end and preferentially with the monomeric form) with STIM1; this interaction increases in response to a depletion of intracellular calcium, decreases both STIM1 aggregation and clustering, interaction of STIM1 with ORAI1 and store-operated Ca(2+) entry (SOCE) activity (PubMed:27185316). Interacts with ASPH and TRDN (By similarity).</text>
</comment>
<comment type="interaction">
    <interactant intactId="EBI-14017981">
        <id>P31415</id>
    </interactant>
    <interactant intactId="EBI-7960826">
        <id>Q8NHY3</id>
        <label>GAS2L2</label>
    </interactant>
    <organismsDiffer>false</organismsDiffer>
    <experiments>3</experiments>
</comment>
<comment type="subcellular location">
    <subcellularLocation>
        <location evidence="8 10">Endoplasmic reticulum</location>
    </subcellularLocation>
    <subcellularLocation>
        <location evidence="9">Sarcoplasmic reticulum</location>
    </subcellularLocation>
    <subcellularLocation>
        <location evidence="2">Sarcoplasmic reticulum lumen</location>
    </subcellularLocation>
    <subcellularLocation>
        <location>Sarcoplasmic reticulum membrane</location>
        <topology>Peripheral membrane protein</topology>
        <orientation evidence="2">Lumenal side</orientation>
    </subcellularLocation>
    <subcellularLocation>
        <location evidence="1">Mitochondrion matrix</location>
    </subcellularLocation>
    <text evidence="2 8 10">This isoform of calsequestrin occurs in the sarcoplasmic reticulum's terminal cisternae luminal spaces of fast skeletal muscle cells. Preferentially forms linear and round aggregates in the endoplasmic reticulum (ER) of resting cells (PubMed:28895244). In a minority of cells, homogeneously detected in the ER lumen (PubMed:28895244). Colocalizes with STIM1 at endoplasmic reticulum in response to a depletion of intracellular calcium (PubMed:27185316).</text>
</comment>
<comment type="tissue specificity">
    <text evidence="9">Expressed in myoblasts (at protein level).</text>
</comment>
<comment type="PTM">
    <text evidence="2">N-glycosylated.</text>
</comment>
<comment type="disease" evidence="6 7 9 10">
    <disease id="DI-04342">
        <name>Myopathy, vacuolar, with CASQ1 aggregates</name>
        <acronym>VMCQA</acronym>
        <description>An autosomal dominant mild muscle disorder characterized by adult onset of muscle cramping and weakness as well as increased levels of serum creatine kinase. The disorder is not progressive, and some patients may be asymptomatic.</description>
        <dbReference type="MIM" id="616231"/>
    </disease>
    <text>The disease is caused by variants affecting the gene represented in this entry.</text>
</comment>
<comment type="disease" evidence="10">
    <disease id="DI-03765">
        <name>Myopathy, tubular aggregate, 1</name>
        <acronym>TAM1</acronym>
        <description>A rare congenital myopathy characterized by regular arrays of membrane tubules on muscle biopsies without additional histopathological hallmarks. Tubular aggregates in muscle are structures of variable appearance consisting of an outer tubule containing either one or more microtubule-like structures or amorphous material. They may occur in a variety of circumstances, including inherited myopathies, alcohol- and drug-induced myopathies, exercise-induced cramps or muscle weakness.</description>
        <dbReference type="MIM" id="160565"/>
    </disease>
    <text>The disease is caused by variants affecting the gene represented in this entry.</text>
</comment>
<comment type="similarity">
    <text evidence="13">Belongs to the calsequestrin family.</text>
</comment>
<comment type="sequence caution" evidence="13">
    <conflict type="erroneous initiation">
        <sequence resource="EMBL-CDS" id="AAB32063"/>
    </conflict>
    <text>Truncated N-terminus.</text>
</comment>
<comment type="sequence caution" evidence="13">
    <conflict type="erroneous initiation">
        <sequence resource="EMBL-CDS" id="AAH22289"/>
    </conflict>
    <text>Truncated N-terminus.</text>
</comment>
<comment type="sequence caution" evidence="13">
    <conflict type="erroneous initiation">
        <sequence resource="EMBL-CDS" id="BAG36060"/>
    </conflict>
    <text>Truncated N-terminus.</text>
</comment>
<comment type="online information" name="Wikipedia">
    <link uri="https://en.wikipedia.org/wiki/Calsequestrin"/>
    <text>Calsequestrin entry</text>
</comment>
<reference key="1">
    <citation type="journal article" date="1990" name="Somat. Cell Mol. Genet.">
        <title>Characterization and localization to human chromosome 1 of human fast-twitch skeletal muscle calsequestrin gene.</title>
        <authorList>
            <person name="Fujii J."/>
            <person name="Willard H.F."/>
            <person name="Maclennan D.H."/>
        </authorList>
    </citation>
    <scope>NUCLEOTIDE SEQUENCE [MRNA]</scope>
</reference>
<reference key="2">
    <citation type="journal article" date="1994" name="Biochem. Biophys. Res. Commun.">
        <title>Molecular cloning of human calmitine, a mitochondrial calcium binding protein, reveals identity with calsequestrine.</title>
        <authorList>
            <person name="Bataille N."/>
            <person name="Schmitt N."/>
            <person name="Aumercier-Maes P."/>
            <person name="Ollivier B."/>
            <person name="Lucas-Heron B."/>
            <person name="Lestienne P."/>
        </authorList>
    </citation>
    <scope>NUCLEOTIDE SEQUENCE [MRNA]</scope>
    <scope>PARTIAL PROTEIN SEQUENCE</scope>
    <source>
        <tissue>Skeletal muscle</tissue>
    </source>
</reference>
<reference key="3">
    <citation type="journal article" date="2004" name="Nat. Genet.">
        <title>Complete sequencing and characterization of 21,243 full-length human cDNAs.</title>
        <authorList>
            <person name="Ota T."/>
            <person name="Suzuki Y."/>
            <person name="Nishikawa T."/>
            <person name="Otsuki T."/>
            <person name="Sugiyama T."/>
            <person name="Irie R."/>
            <person name="Wakamatsu A."/>
            <person name="Hayashi K."/>
            <person name="Sato H."/>
            <person name="Nagai K."/>
            <person name="Kimura K."/>
            <person name="Makita H."/>
            <person name="Sekine M."/>
            <person name="Obayashi M."/>
            <person name="Nishi T."/>
            <person name="Shibahara T."/>
            <person name="Tanaka T."/>
            <person name="Ishii S."/>
            <person name="Yamamoto J."/>
            <person name="Saito K."/>
            <person name="Kawai Y."/>
            <person name="Isono Y."/>
            <person name="Nakamura Y."/>
            <person name="Nagahari K."/>
            <person name="Murakami K."/>
            <person name="Yasuda T."/>
            <person name="Iwayanagi T."/>
            <person name="Wagatsuma M."/>
            <person name="Shiratori A."/>
            <person name="Sudo H."/>
            <person name="Hosoiri T."/>
            <person name="Kaku Y."/>
            <person name="Kodaira H."/>
            <person name="Kondo H."/>
            <person name="Sugawara M."/>
            <person name="Takahashi M."/>
            <person name="Kanda K."/>
            <person name="Yokoi T."/>
            <person name="Furuya T."/>
            <person name="Kikkawa E."/>
            <person name="Omura Y."/>
            <person name="Abe K."/>
            <person name="Kamihara K."/>
            <person name="Katsuta N."/>
            <person name="Sato K."/>
            <person name="Tanikawa M."/>
            <person name="Yamazaki M."/>
            <person name="Ninomiya K."/>
            <person name="Ishibashi T."/>
            <person name="Yamashita H."/>
            <person name="Murakawa K."/>
            <person name="Fujimori K."/>
            <person name="Tanai H."/>
            <person name="Kimata M."/>
            <person name="Watanabe M."/>
            <person name="Hiraoka S."/>
            <person name="Chiba Y."/>
            <person name="Ishida S."/>
            <person name="Ono Y."/>
            <person name="Takiguchi S."/>
            <person name="Watanabe S."/>
            <person name="Yosida M."/>
            <person name="Hotuta T."/>
            <person name="Kusano J."/>
            <person name="Kanehori K."/>
            <person name="Takahashi-Fujii A."/>
            <person name="Hara H."/>
            <person name="Tanase T.-O."/>
            <person name="Nomura Y."/>
            <person name="Togiya S."/>
            <person name="Komai F."/>
            <person name="Hara R."/>
            <person name="Takeuchi K."/>
            <person name="Arita M."/>
            <person name="Imose N."/>
            <person name="Musashino K."/>
            <person name="Yuuki H."/>
            <person name="Oshima A."/>
            <person name="Sasaki N."/>
            <person name="Aotsuka S."/>
            <person name="Yoshikawa Y."/>
            <person name="Matsunawa H."/>
            <person name="Ichihara T."/>
            <person name="Shiohata N."/>
            <person name="Sano S."/>
            <person name="Moriya S."/>
            <person name="Momiyama H."/>
            <person name="Satoh N."/>
            <person name="Takami S."/>
            <person name="Terashima Y."/>
            <person name="Suzuki O."/>
            <person name="Nakagawa S."/>
            <person name="Senoh A."/>
            <person name="Mizoguchi H."/>
            <person name="Goto Y."/>
            <person name="Shimizu F."/>
            <person name="Wakebe H."/>
            <person name="Hishigaki H."/>
            <person name="Watanabe T."/>
            <person name="Sugiyama A."/>
            <person name="Takemoto M."/>
            <person name="Kawakami B."/>
            <person name="Yamazaki M."/>
            <person name="Watanabe K."/>
            <person name="Kumagai A."/>
            <person name="Itakura S."/>
            <person name="Fukuzumi Y."/>
            <person name="Fujimori Y."/>
            <person name="Komiyama M."/>
            <person name="Tashiro H."/>
            <person name="Tanigami A."/>
            <person name="Fujiwara T."/>
            <person name="Ono T."/>
            <person name="Yamada K."/>
            <person name="Fujii Y."/>
            <person name="Ozaki K."/>
            <person name="Hirao M."/>
            <person name="Ohmori Y."/>
            <person name="Kawabata A."/>
            <person name="Hikiji T."/>
            <person name="Kobatake N."/>
            <person name="Inagaki H."/>
            <person name="Ikema Y."/>
            <person name="Okamoto S."/>
            <person name="Okitani R."/>
            <person name="Kawakami T."/>
            <person name="Noguchi S."/>
            <person name="Itoh T."/>
            <person name="Shigeta K."/>
            <person name="Senba T."/>
            <person name="Matsumura K."/>
            <person name="Nakajima Y."/>
            <person name="Mizuno T."/>
            <person name="Morinaga M."/>
            <person name="Sasaki M."/>
            <person name="Togashi T."/>
            <person name="Oyama M."/>
            <person name="Hata H."/>
            <person name="Watanabe M."/>
            <person name="Komatsu T."/>
            <person name="Mizushima-Sugano J."/>
            <person name="Satoh T."/>
            <person name="Shirai Y."/>
            <person name="Takahashi Y."/>
            <person name="Nakagawa K."/>
            <person name="Okumura K."/>
            <person name="Nagase T."/>
            <person name="Nomura N."/>
            <person name="Kikuchi H."/>
            <person name="Masuho Y."/>
            <person name="Yamashita R."/>
            <person name="Nakai K."/>
            <person name="Yada T."/>
            <person name="Nakamura Y."/>
            <person name="Ohara O."/>
            <person name="Isogai T."/>
            <person name="Sugano S."/>
        </authorList>
    </citation>
    <scope>NUCLEOTIDE SEQUENCE [LARGE SCALE MRNA]</scope>
    <source>
        <tissue>Pericardium</tissue>
    </source>
</reference>
<reference key="4">
    <citation type="journal article" date="2006" name="Nature">
        <title>The DNA sequence and biological annotation of human chromosome 1.</title>
        <authorList>
            <person name="Gregory S.G."/>
            <person name="Barlow K.F."/>
            <person name="McLay K.E."/>
            <person name="Kaul R."/>
            <person name="Swarbreck D."/>
            <person name="Dunham A."/>
            <person name="Scott C.E."/>
            <person name="Howe K.L."/>
            <person name="Woodfine K."/>
            <person name="Spencer C.C.A."/>
            <person name="Jones M.C."/>
            <person name="Gillson C."/>
            <person name="Searle S."/>
            <person name="Zhou Y."/>
            <person name="Kokocinski F."/>
            <person name="McDonald L."/>
            <person name="Evans R."/>
            <person name="Phillips K."/>
            <person name="Atkinson A."/>
            <person name="Cooper R."/>
            <person name="Jones C."/>
            <person name="Hall R.E."/>
            <person name="Andrews T.D."/>
            <person name="Lloyd C."/>
            <person name="Ainscough R."/>
            <person name="Almeida J.P."/>
            <person name="Ambrose K.D."/>
            <person name="Anderson F."/>
            <person name="Andrew R.W."/>
            <person name="Ashwell R.I.S."/>
            <person name="Aubin K."/>
            <person name="Babbage A.K."/>
            <person name="Bagguley C.L."/>
            <person name="Bailey J."/>
            <person name="Beasley H."/>
            <person name="Bethel G."/>
            <person name="Bird C.P."/>
            <person name="Bray-Allen S."/>
            <person name="Brown J.Y."/>
            <person name="Brown A.J."/>
            <person name="Buckley D."/>
            <person name="Burton J."/>
            <person name="Bye J."/>
            <person name="Carder C."/>
            <person name="Chapman J.C."/>
            <person name="Clark S.Y."/>
            <person name="Clarke G."/>
            <person name="Clee C."/>
            <person name="Cobley V."/>
            <person name="Collier R.E."/>
            <person name="Corby N."/>
            <person name="Coville G.J."/>
            <person name="Davies J."/>
            <person name="Deadman R."/>
            <person name="Dunn M."/>
            <person name="Earthrowl M."/>
            <person name="Ellington A.G."/>
            <person name="Errington H."/>
            <person name="Frankish A."/>
            <person name="Frankland J."/>
            <person name="French L."/>
            <person name="Garner P."/>
            <person name="Garnett J."/>
            <person name="Gay L."/>
            <person name="Ghori M.R.J."/>
            <person name="Gibson R."/>
            <person name="Gilby L.M."/>
            <person name="Gillett W."/>
            <person name="Glithero R.J."/>
            <person name="Grafham D.V."/>
            <person name="Griffiths C."/>
            <person name="Griffiths-Jones S."/>
            <person name="Grocock R."/>
            <person name="Hammond S."/>
            <person name="Harrison E.S.I."/>
            <person name="Hart E."/>
            <person name="Haugen E."/>
            <person name="Heath P.D."/>
            <person name="Holmes S."/>
            <person name="Holt K."/>
            <person name="Howden P.J."/>
            <person name="Hunt A.R."/>
            <person name="Hunt S.E."/>
            <person name="Hunter G."/>
            <person name="Isherwood J."/>
            <person name="James R."/>
            <person name="Johnson C."/>
            <person name="Johnson D."/>
            <person name="Joy A."/>
            <person name="Kay M."/>
            <person name="Kershaw J.K."/>
            <person name="Kibukawa M."/>
            <person name="Kimberley A.M."/>
            <person name="King A."/>
            <person name="Knights A.J."/>
            <person name="Lad H."/>
            <person name="Laird G."/>
            <person name="Lawlor S."/>
            <person name="Leongamornlert D.A."/>
            <person name="Lloyd D.M."/>
            <person name="Loveland J."/>
            <person name="Lovell J."/>
            <person name="Lush M.J."/>
            <person name="Lyne R."/>
            <person name="Martin S."/>
            <person name="Mashreghi-Mohammadi M."/>
            <person name="Matthews L."/>
            <person name="Matthews N.S.W."/>
            <person name="McLaren S."/>
            <person name="Milne S."/>
            <person name="Mistry S."/>
            <person name="Moore M.J.F."/>
            <person name="Nickerson T."/>
            <person name="O'Dell C.N."/>
            <person name="Oliver K."/>
            <person name="Palmeiri A."/>
            <person name="Palmer S.A."/>
            <person name="Parker A."/>
            <person name="Patel D."/>
            <person name="Pearce A.V."/>
            <person name="Peck A.I."/>
            <person name="Pelan S."/>
            <person name="Phelps K."/>
            <person name="Phillimore B.J."/>
            <person name="Plumb R."/>
            <person name="Rajan J."/>
            <person name="Raymond C."/>
            <person name="Rouse G."/>
            <person name="Saenphimmachak C."/>
            <person name="Sehra H.K."/>
            <person name="Sheridan E."/>
            <person name="Shownkeen R."/>
            <person name="Sims S."/>
            <person name="Skuce C.D."/>
            <person name="Smith M."/>
            <person name="Steward C."/>
            <person name="Subramanian S."/>
            <person name="Sycamore N."/>
            <person name="Tracey A."/>
            <person name="Tromans A."/>
            <person name="Van Helmond Z."/>
            <person name="Wall M."/>
            <person name="Wallis J.M."/>
            <person name="White S."/>
            <person name="Whitehead S.L."/>
            <person name="Wilkinson J.E."/>
            <person name="Willey D.L."/>
            <person name="Williams H."/>
            <person name="Wilming L."/>
            <person name="Wray P.W."/>
            <person name="Wu Z."/>
            <person name="Coulson A."/>
            <person name="Vaudin M."/>
            <person name="Sulston J.E."/>
            <person name="Durbin R.M."/>
            <person name="Hubbard T."/>
            <person name="Wooster R."/>
            <person name="Dunham I."/>
            <person name="Carter N.P."/>
            <person name="McVean G."/>
            <person name="Ross M.T."/>
            <person name="Harrow J."/>
            <person name="Olson M.V."/>
            <person name="Beck S."/>
            <person name="Rogers J."/>
            <person name="Bentley D.R."/>
        </authorList>
    </citation>
    <scope>NUCLEOTIDE SEQUENCE [LARGE SCALE GENOMIC DNA]</scope>
</reference>
<reference key="5">
    <citation type="submission" date="2005-09" db="EMBL/GenBank/DDBJ databases">
        <authorList>
            <person name="Mural R.J."/>
            <person name="Istrail S."/>
            <person name="Sutton G."/>
            <person name="Florea L."/>
            <person name="Halpern A.L."/>
            <person name="Mobarry C.M."/>
            <person name="Lippert R."/>
            <person name="Walenz B."/>
            <person name="Shatkay H."/>
            <person name="Dew I."/>
            <person name="Miller J.R."/>
            <person name="Flanigan M.J."/>
            <person name="Edwards N.J."/>
            <person name="Bolanos R."/>
            <person name="Fasulo D."/>
            <person name="Halldorsson B.V."/>
            <person name="Hannenhalli S."/>
            <person name="Turner R."/>
            <person name="Yooseph S."/>
            <person name="Lu F."/>
            <person name="Nusskern D.R."/>
            <person name="Shue B.C."/>
            <person name="Zheng X.H."/>
            <person name="Zhong F."/>
            <person name="Delcher A.L."/>
            <person name="Huson D.H."/>
            <person name="Kravitz S.A."/>
            <person name="Mouchard L."/>
            <person name="Reinert K."/>
            <person name="Remington K.A."/>
            <person name="Clark A.G."/>
            <person name="Waterman M.S."/>
            <person name="Eichler E.E."/>
            <person name="Adams M.D."/>
            <person name="Hunkapiller M.W."/>
            <person name="Myers E.W."/>
            <person name="Venter J.C."/>
        </authorList>
    </citation>
    <scope>NUCLEOTIDE SEQUENCE [LARGE SCALE GENOMIC DNA]</scope>
</reference>
<reference key="6">
    <citation type="journal article" date="2004" name="Genome Res.">
        <title>The status, quality, and expansion of the NIH full-length cDNA project: the Mammalian Gene Collection (MGC).</title>
        <authorList>
            <consortium name="The MGC Project Team"/>
        </authorList>
    </citation>
    <scope>NUCLEOTIDE SEQUENCE [LARGE SCALE MRNA]</scope>
    <source>
        <tissue>Skeletal muscle</tissue>
    </source>
</reference>
<reference key="7">
    <citation type="journal article" date="2016" name="Cell. Physiol. Biochem.">
        <title>Calsequestrin-1 regulates store-operated Ca2+ entry by inhibiting STIM1 aggregation.</title>
        <authorList>
            <person name="Zhang L."/>
            <person name="Wang L."/>
            <person name="Li S."/>
            <person name="Xue J."/>
            <person name="Luo D."/>
        </authorList>
    </citation>
    <scope>FUNCTION</scope>
    <scope>SUBUNIT</scope>
    <scope>INTERACTION WITH STIM1</scope>
    <scope>SUBCELLULAR LOCATION</scope>
</reference>
<reference key="8">
    <citation type="journal article" date="2012" name="J. Biol. Chem.">
        <title>High-capacity Ca2+ binding of human skeletal calsequestrin.</title>
        <authorList>
            <person name="Sanchez E.J."/>
            <person name="Lewis K.M."/>
            <person name="Danna B.R."/>
            <person name="Kang C."/>
        </authorList>
    </citation>
    <scope>X-RAY CRYSTALLOGRAPHY (2.02 ANGSTROMS) OF 35-396 IN COMPLEX WITH CALCIUM</scope>
    <scope>FUNCTION</scope>
    <scope>SUBUNIT</scope>
</reference>
<reference key="9">
    <citation type="journal article" date="2014" name="Hum. Mutat.">
        <title>A mutation in the CASQ1 gene causes a vacuolar myopathy with accumulation of sarcoplasmic reticulum protein aggregates.</title>
        <authorList>
            <person name="Rossi D."/>
            <person name="Vezzani B."/>
            <person name="Galli L."/>
            <person name="Paolini C."/>
            <person name="Toniolo L."/>
            <person name="Pierantozzi E."/>
            <person name="Spinozzi S."/>
            <person name="Barone V."/>
            <person name="Pegoraro E."/>
            <person name="Bello L."/>
            <person name="Cenacchi G."/>
            <person name="Vattemi G."/>
            <person name="Tomelleri G."/>
            <person name="Ricci G."/>
            <person name="Siciliano G."/>
            <person name="Protasi F."/>
            <person name="Reggiani C."/>
            <person name="Sorrentino V."/>
        </authorList>
    </citation>
    <scope>INVOLVEMENT IN VMCQA</scope>
    <scope>VARIANT VMCQA GLY-244</scope>
    <scope>CHARACTERIZATION OF VARIANT VMCQA GLY-244</scope>
</reference>
<reference key="10">
    <citation type="journal article" date="2015" name="J. Med. Genet.">
        <title>A CASQ1 founder mutation in three Italian families with protein aggregate myopathy and hyperCKaemia.</title>
        <authorList>
            <person name="Di Blasi C."/>
            <person name="Sansanelli S."/>
            <person name="Ruggieri A."/>
            <person name="Moriggi M."/>
            <person name="Vasso M."/>
            <person name="D'Adamo A.P."/>
            <person name="Blasevich F."/>
            <person name="Zanotti S."/>
            <person name="Paolini C."/>
            <person name="Protasi F."/>
            <person name="Tezzon F."/>
            <person name="Gelfi C."/>
            <person name="Morandi L."/>
            <person name="Pessia M."/>
            <person name="Mora M."/>
        </authorList>
    </citation>
    <scope>VARIANT VMCQA GLY-244</scope>
    <scope>CHARACTERIZATION OF VARIANT VMCQA GLY-244</scope>
    <scope>SUBUNIT</scope>
</reference>
<reference key="11">
    <citation type="journal article" date="2016" name="PLoS ONE">
        <title>A Calsequestrin-1 Mutation Associated with a Skeletal Muscle Disease Alters Sarcoplasmic Ca2+ Release.</title>
        <authorList>
            <person name="D'Adamo M.C."/>
            <person name="Sforna L."/>
            <person name="Visentin S."/>
            <person name="Grottesi A."/>
            <person name="Servettini L."/>
            <person name="Guglielmi L."/>
            <person name="Macchioni L."/>
            <person name="Saredi S."/>
            <person name="Curcio M."/>
            <person name="De Nuccio C."/>
            <person name="Hasan S."/>
            <person name="Corazzi L."/>
            <person name="Franciolini F."/>
            <person name="Mora M."/>
            <person name="Catacuzzeno L."/>
            <person name="Pessia M."/>
        </authorList>
    </citation>
    <scope>VARIANT VMCQA GLY-244</scope>
    <scope>CHARACTERIZATION OF VARIANT VMCQA GLY-244</scope>
    <scope>SUBCELLULAR LOCATION</scope>
    <scope>TISSUE SPECIFICITY</scope>
</reference>
<reference key="12">
    <citation type="journal article" date="2017" name="Hum. Mutat.">
        <title>Identification and characterization of three novel mutations in the CASQ1 gene in four patients with tubular aggregate myopathy.</title>
        <authorList>
            <person name="Barone V."/>
            <person name="Del Re V."/>
            <person name="Gamberucci A."/>
            <person name="Polverino V."/>
            <person name="Galli L."/>
            <person name="Rossi D."/>
            <person name="Costanzi E."/>
            <person name="Toniolo L."/>
            <person name="Berti G."/>
            <person name="Malandrini A."/>
            <person name="Ricci G."/>
            <person name="Siciliano G."/>
            <person name="Vattemi G."/>
            <person name="Tomelleri G."/>
            <person name="Pierantozzi E."/>
            <person name="Spinozzi S."/>
            <person name="Volpi N."/>
            <person name="Fulceri R."/>
            <person name="Battistutta R."/>
            <person name="Reggiani C."/>
            <person name="Sorrentino V."/>
        </authorList>
    </citation>
    <scope>VARIANTS TAM1 ASN-44; ASP-103 AND THR-385</scope>
    <scope>CHARACTERIZATION OF VARIANTS TAM1 ASN-44; ASP-103 AND THR-385</scope>
    <scope>CHARACTERIZATION OF VARIANT VMCQA GLY-244</scope>
    <scope>INVOLVEMENT IN TAM1</scope>
    <scope>FUNCTION</scope>
    <scope>SUBUNIT</scope>
    <scope>SUBCELLULAR LOCATION</scope>
</reference>
<accession>P31415</accession>
<accession>B1AKZ2</accession>
<accession>B2R863</accession>
<accession>Q8TBW7</accession>
<gene>
    <name type="primary">CASQ1</name>
    <name type="synonym">CASQ</name>
</gene>
<feature type="signal peptide" evidence="4">
    <location>
        <begin position="1"/>
        <end position="34"/>
    </location>
</feature>
<feature type="chain" id="PRO_0000004212" description="Calsequestrin-1">
    <location>
        <begin position="35"/>
        <end position="396"/>
    </location>
</feature>
<feature type="modified residue" description="Phosphotyrosine" evidence="3">
    <location>
        <position position="43"/>
    </location>
</feature>
<feature type="modified residue" description="Phosphoserine" evidence="3">
    <location>
        <position position="81"/>
    </location>
</feature>
<feature type="modified residue" description="Phosphothreonine" evidence="3">
    <location>
        <position position="124"/>
    </location>
</feature>
<feature type="modified residue" description="Phosphoserine" evidence="3">
    <location>
        <position position="216"/>
    </location>
</feature>
<feature type="glycosylation site" description="N-linked (GlcNAc...) asparagine" evidence="4">
    <location>
        <position position="350"/>
    </location>
</feature>
<feature type="sequence variant" id="VAR_079704" description="In TAM1; increased calcium-dependent susceptibility to proteolytic degradation; decreased calcium-dependent aggregation; decreased calcium-dependent polymerization; no effect on subcellular localization; no effect on the subcellular localization of STIM1; decreased calcium content of intracellular stores; loss of the ability to inhibit store-operated calcium entry (SOCE) activity; dbSNP:rs140253806." evidence="10">
    <original>D</original>
    <variation>N</variation>
    <location>
        <position position="44"/>
    </location>
</feature>
<feature type="sequence variant" id="VAR_079705" description="In TAM1; increased calcium-dependent susceptibility to proteolytic degradation; decreased calcium-dependent aggregation; decreased calcium-dependent polymerization; no effect on subcellular localization; no effect on the subcellular localization of STIM1; decreased calcium content of intracellular stores; no effect of the ability to inhibit store-operated calcium entry (SOCE) activity; muscle fibers with the mutation have significantly decreased calcium-dependent sensitivity to caffeine; dbSNP:rs1654108256." evidence="10">
    <original>G</original>
    <variation>D</variation>
    <location>
        <position position="103"/>
    </location>
</feature>
<feature type="sequence variant" id="VAR_053021" description="In dbSNP:rs34489853.">
    <original>Y</original>
    <variation>F</variation>
    <location>
        <position position="140"/>
    </location>
</feature>
<feature type="sequence variant" id="VAR_073337" description="In VMCQA; no effect on calcium-dependent susceptibility to proteolytic degradation; increased calcium-dependent aggregation; causes impaired polymerization of the protein; no effect on subcellular localization; decreased calcium content of sarcoplasmic reticulum stores; reduced sarcoplasmic reticulum calcium release during excitation-contraction coupling; dbSNP:rs730882052." evidence="6 7 9 10">
    <original>D</original>
    <variation>G</variation>
    <location>
        <position position="244"/>
    </location>
</feature>
<feature type="sequence variant" id="VAR_079706" description="In TAM1; no effect on calcium-dependent susceptibility to proteolytic degradation; increased moderately calcium-dependent aggregation; increased moderately calcium-dependent polymerization; no effect on subcellular localization; no effect on the subcellular localization of STIM1; decreased calcium content of intracellular stores; loss of the ability to inhibit store-operated calcium entry (SOCE) activity; dbSNP:rs371278891." evidence="10">
    <original>I</original>
    <variation>T</variation>
    <location>
        <position position="385"/>
    </location>
</feature>
<feature type="sequence conflict" description="In Ref. 2; AAB32063." evidence="13" ref="2">
    <original>SV</original>
    <variation>RL</variation>
    <location>
        <begin position="356"/>
        <end position="357"/>
    </location>
</feature>
<feature type="strand" evidence="14">
    <location>
        <begin position="49"/>
        <end position="51"/>
    </location>
</feature>
<feature type="turn" evidence="16">
    <location>
        <begin position="54"/>
        <end position="56"/>
    </location>
</feature>
<feature type="helix" evidence="16">
    <location>
        <begin position="57"/>
        <end position="63"/>
    </location>
</feature>
<feature type="strand" evidence="16">
    <location>
        <begin position="65"/>
        <end position="72"/>
    </location>
</feature>
<feature type="helix" evidence="16">
    <location>
        <begin position="79"/>
        <end position="98"/>
    </location>
</feature>
<feature type="turn" evidence="16">
    <location>
        <begin position="99"/>
        <end position="103"/>
    </location>
</feature>
<feature type="strand" evidence="16">
    <location>
        <begin position="104"/>
        <end position="110"/>
    </location>
</feature>
<feature type="turn" evidence="16">
    <location>
        <begin position="111"/>
        <end position="114"/>
    </location>
</feature>
<feature type="helix" evidence="16">
    <location>
        <begin position="115"/>
        <end position="121"/>
    </location>
</feature>
<feature type="strand" evidence="16">
    <location>
        <begin position="129"/>
        <end position="133"/>
    </location>
</feature>
<feature type="strand" evidence="16">
    <location>
        <begin position="136"/>
        <end position="140"/>
    </location>
</feature>
<feature type="helix" evidence="16">
    <location>
        <begin position="146"/>
        <end position="157"/>
    </location>
</feature>
<feature type="strand" evidence="16">
    <location>
        <begin position="160"/>
        <end position="163"/>
    </location>
</feature>
<feature type="helix" evidence="16">
    <location>
        <begin position="167"/>
        <end position="175"/>
    </location>
</feature>
<feature type="strand" evidence="16">
    <location>
        <begin position="181"/>
        <end position="185"/>
    </location>
</feature>
<feature type="strand" evidence="15">
    <location>
        <begin position="189"/>
        <end position="191"/>
    </location>
</feature>
<feature type="helix" evidence="16">
    <location>
        <begin position="192"/>
        <end position="204"/>
    </location>
</feature>
<feature type="turn" evidence="16">
    <location>
        <begin position="205"/>
        <end position="207"/>
    </location>
</feature>
<feature type="strand" evidence="16">
    <location>
        <begin position="210"/>
        <end position="213"/>
    </location>
</feature>
<feature type="helix" evidence="16">
    <location>
        <begin position="216"/>
        <end position="222"/>
    </location>
</feature>
<feature type="strand" evidence="16">
    <location>
        <begin position="229"/>
        <end position="232"/>
    </location>
</feature>
<feature type="strand" evidence="16">
    <location>
        <begin position="243"/>
        <end position="246"/>
    </location>
</feature>
<feature type="helix" evidence="16">
    <location>
        <begin position="249"/>
        <end position="258"/>
    </location>
</feature>
<feature type="strand" evidence="16">
    <location>
        <begin position="263"/>
        <end position="266"/>
    </location>
</feature>
<feature type="helix" evidence="16">
    <location>
        <begin position="269"/>
        <end position="271"/>
    </location>
</feature>
<feature type="helix" evidence="16">
    <location>
        <begin position="272"/>
        <end position="276"/>
    </location>
</feature>
<feature type="strand" evidence="16">
    <location>
        <begin position="283"/>
        <end position="288"/>
    </location>
</feature>
<feature type="strand" evidence="15">
    <location>
        <begin position="291"/>
        <end position="293"/>
    </location>
</feature>
<feature type="helix" evidence="16">
    <location>
        <begin position="294"/>
        <end position="309"/>
    </location>
</feature>
<feature type="turn" evidence="16">
    <location>
        <begin position="310"/>
        <end position="312"/>
    </location>
</feature>
<feature type="strand" evidence="16">
    <location>
        <begin position="318"/>
        <end position="321"/>
    </location>
</feature>
<feature type="helix" evidence="16">
    <location>
        <begin position="323"/>
        <end position="325"/>
    </location>
</feature>
<feature type="helix" evidence="16">
    <location>
        <begin position="327"/>
        <end position="329"/>
    </location>
</feature>
<feature type="helix" evidence="16">
    <location>
        <begin position="330"/>
        <end position="337"/>
    </location>
</feature>
<feature type="strand" evidence="15">
    <location>
        <begin position="341"/>
        <end position="343"/>
    </location>
</feature>
<feature type="strand" evidence="16">
    <location>
        <begin position="345"/>
        <end position="350"/>
    </location>
</feature>
<feature type="turn" evidence="16">
    <location>
        <begin position="351"/>
        <end position="353"/>
    </location>
</feature>
<feature type="strand" evidence="16">
    <location>
        <begin position="356"/>
        <end position="358"/>
    </location>
</feature>
<feature type="strand" evidence="15">
    <location>
        <begin position="363"/>
        <end position="365"/>
    </location>
</feature>
<feature type="helix" evidence="16">
    <location>
        <begin position="370"/>
        <end position="381"/>
    </location>
</feature>
<keyword id="KW-0002">3D-structure</keyword>
<keyword id="KW-0106">Calcium</keyword>
<keyword id="KW-0903">Direct protein sequencing</keyword>
<keyword id="KW-0225">Disease variant</keyword>
<keyword id="KW-0256">Endoplasmic reticulum</keyword>
<keyword id="KW-0325">Glycoprotein</keyword>
<keyword id="KW-0472">Membrane</keyword>
<keyword id="KW-0479">Metal-binding</keyword>
<keyword id="KW-0496">Mitochondrion</keyword>
<keyword id="KW-0514">Muscle protein</keyword>
<keyword id="KW-0597">Phosphoprotein</keyword>
<keyword id="KW-1267">Proteomics identification</keyword>
<keyword id="KW-1185">Reference proteome</keyword>
<keyword id="KW-0703">Sarcoplasmic reticulum</keyword>
<keyword id="KW-0732">Signal</keyword>
<dbReference type="EMBL" id="S73775">
    <property type="protein sequence ID" value="AAB32063.1"/>
    <property type="status" value="ALT_INIT"/>
    <property type="molecule type" value="mRNA"/>
</dbReference>
<dbReference type="EMBL" id="AK313250">
    <property type="protein sequence ID" value="BAG36060.1"/>
    <property type="status" value="ALT_INIT"/>
    <property type="molecule type" value="mRNA"/>
</dbReference>
<dbReference type="EMBL" id="AL121987">
    <property type="status" value="NOT_ANNOTATED_CDS"/>
    <property type="molecule type" value="Genomic_DNA"/>
</dbReference>
<dbReference type="EMBL" id="CH471121">
    <property type="protein sequence ID" value="EAW52736.1"/>
    <property type="molecule type" value="Genomic_DNA"/>
</dbReference>
<dbReference type="EMBL" id="BC022289">
    <property type="protein sequence ID" value="AAH22289.1"/>
    <property type="status" value="ALT_INIT"/>
    <property type="molecule type" value="mRNA"/>
</dbReference>
<dbReference type="CCDS" id="CCDS1198.2"/>
<dbReference type="PIR" id="A60424">
    <property type="entry name" value="A60424"/>
</dbReference>
<dbReference type="RefSeq" id="NP_001222.3">
    <property type="nucleotide sequence ID" value="NM_001231.4"/>
</dbReference>
<dbReference type="PDB" id="3UOM">
    <property type="method" value="X-ray"/>
    <property type="resolution" value="2.02 A"/>
    <property type="chains" value="A/B/C/D/E/F=35-396"/>
</dbReference>
<dbReference type="PDB" id="5CRD">
    <property type="method" value="X-ray"/>
    <property type="resolution" value="2.08 A"/>
    <property type="chains" value="A=35-396"/>
</dbReference>
<dbReference type="PDB" id="5CRE">
    <property type="method" value="X-ray"/>
    <property type="resolution" value="3.31 A"/>
    <property type="chains" value="A=35-396"/>
</dbReference>
<dbReference type="PDB" id="5CRG">
    <property type="method" value="X-ray"/>
    <property type="resolution" value="1.97 A"/>
    <property type="chains" value="A/B/C/D=35-396"/>
</dbReference>
<dbReference type="PDB" id="5CRH">
    <property type="method" value="X-ray"/>
    <property type="resolution" value="2.03 A"/>
    <property type="chains" value="A/B=35-396"/>
</dbReference>
<dbReference type="PDB" id="8F48">
    <property type="method" value="X-ray"/>
    <property type="resolution" value="2.90 A"/>
    <property type="chains" value="A/B=34-396"/>
</dbReference>
<dbReference type="PDBsum" id="3UOM"/>
<dbReference type="PDBsum" id="5CRD"/>
<dbReference type="PDBsum" id="5CRE"/>
<dbReference type="PDBsum" id="5CRG"/>
<dbReference type="PDBsum" id="5CRH"/>
<dbReference type="PDBsum" id="8F48"/>
<dbReference type="SMR" id="P31415"/>
<dbReference type="BioGRID" id="107294">
    <property type="interactions" value="5"/>
</dbReference>
<dbReference type="FunCoup" id="P31415">
    <property type="interactions" value="264"/>
</dbReference>
<dbReference type="IntAct" id="P31415">
    <property type="interactions" value="3"/>
</dbReference>
<dbReference type="STRING" id="9606.ENSP00000357057"/>
<dbReference type="DrugBank" id="DB11093">
    <property type="generic name" value="Calcium citrate"/>
</dbReference>
<dbReference type="DrugBank" id="DB13800">
    <property type="generic name" value="Calcium levulinate"/>
</dbReference>
<dbReference type="DrugBank" id="DB11348">
    <property type="generic name" value="Calcium Phosphate"/>
</dbReference>
<dbReference type="DrugBank" id="DB14481">
    <property type="generic name" value="Calcium phosphate dihydrate"/>
</dbReference>
<dbReference type="TCDB" id="8.A.88.1.1">
    <property type="family name" value="the calciquestrin (casq) family"/>
</dbReference>
<dbReference type="GlyCosmos" id="P31415">
    <property type="glycosylation" value="1 site, No reported glycans"/>
</dbReference>
<dbReference type="GlyGen" id="P31415">
    <property type="glycosylation" value="1 site"/>
</dbReference>
<dbReference type="iPTMnet" id="P31415"/>
<dbReference type="PhosphoSitePlus" id="P31415"/>
<dbReference type="BioMuta" id="CASQ1"/>
<dbReference type="DMDM" id="341940551"/>
<dbReference type="MassIVE" id="P31415"/>
<dbReference type="PaxDb" id="9606-ENSP00000357057"/>
<dbReference type="PeptideAtlas" id="P31415"/>
<dbReference type="ProteomicsDB" id="54788"/>
<dbReference type="Antibodypedia" id="1664">
    <property type="antibodies" value="150 antibodies from 27 providers"/>
</dbReference>
<dbReference type="DNASU" id="844"/>
<dbReference type="Ensembl" id="ENST00000368078.8">
    <property type="protein sequence ID" value="ENSP00000357057.3"/>
    <property type="gene ID" value="ENSG00000143318.13"/>
</dbReference>
<dbReference type="GeneID" id="844"/>
<dbReference type="KEGG" id="hsa:844"/>
<dbReference type="MANE-Select" id="ENST00000368078.8">
    <property type="protein sequence ID" value="ENSP00000357057.3"/>
    <property type="RefSeq nucleotide sequence ID" value="NM_001231.5"/>
    <property type="RefSeq protein sequence ID" value="NP_001222.3"/>
</dbReference>
<dbReference type="UCSC" id="uc010pja.3">
    <property type="organism name" value="human"/>
</dbReference>
<dbReference type="AGR" id="HGNC:1512"/>
<dbReference type="CTD" id="844"/>
<dbReference type="DisGeNET" id="844"/>
<dbReference type="GeneCards" id="CASQ1"/>
<dbReference type="HGNC" id="HGNC:1512">
    <property type="gene designation" value="CASQ1"/>
</dbReference>
<dbReference type="HPA" id="ENSG00000143318">
    <property type="expression patterns" value="Group enriched (skeletal muscle, tongue)"/>
</dbReference>
<dbReference type="MalaCards" id="CASQ1"/>
<dbReference type="MIM" id="114250">
    <property type="type" value="gene"/>
</dbReference>
<dbReference type="MIM" id="160565">
    <property type="type" value="phenotype"/>
</dbReference>
<dbReference type="MIM" id="616231">
    <property type="type" value="phenotype"/>
</dbReference>
<dbReference type="neXtProt" id="NX_P31415"/>
<dbReference type="OpenTargets" id="ENSG00000143318"/>
<dbReference type="Orphanet" id="2593">
    <property type="disease" value="Tubular aggregate myopathy"/>
</dbReference>
<dbReference type="Orphanet" id="88635">
    <property type="disease" value="Vacuolar myopathy with sarcoplasmic reticulum protein aggregates"/>
</dbReference>
<dbReference type="PharmGKB" id="PA26095"/>
<dbReference type="VEuPathDB" id="HostDB:ENSG00000143318"/>
<dbReference type="eggNOG" id="ENOG502QQUJ">
    <property type="taxonomic scope" value="Eukaryota"/>
</dbReference>
<dbReference type="GeneTree" id="ENSGT00390000019377"/>
<dbReference type="HOGENOM" id="CLU_036303_1_0_1"/>
<dbReference type="InParanoid" id="P31415"/>
<dbReference type="OMA" id="WMEMDNE"/>
<dbReference type="OrthoDB" id="10038131at2759"/>
<dbReference type="PAN-GO" id="P31415">
    <property type="GO annotations" value="4 GO annotations based on evolutionary models"/>
</dbReference>
<dbReference type="PhylomeDB" id="P31415"/>
<dbReference type="TreeFam" id="TF313796"/>
<dbReference type="PathwayCommons" id="P31415"/>
<dbReference type="Reactome" id="R-HSA-2672351">
    <property type="pathway name" value="Stimuli-sensing channels"/>
</dbReference>
<dbReference type="Reactome" id="R-HSA-5578775">
    <property type="pathway name" value="Ion homeostasis"/>
</dbReference>
<dbReference type="SignaLink" id="P31415"/>
<dbReference type="BioGRID-ORCS" id="844">
    <property type="hits" value="23 hits in 1150 CRISPR screens"/>
</dbReference>
<dbReference type="EvolutionaryTrace" id="P31415"/>
<dbReference type="GenomeRNAi" id="844"/>
<dbReference type="Pharos" id="P31415">
    <property type="development level" value="Tbio"/>
</dbReference>
<dbReference type="PRO" id="PR:P31415"/>
<dbReference type="Proteomes" id="UP000005640">
    <property type="component" value="Chromosome 1"/>
</dbReference>
<dbReference type="RNAct" id="P31415">
    <property type="molecule type" value="protein"/>
</dbReference>
<dbReference type="Bgee" id="ENSG00000143318">
    <property type="expression patterns" value="Expressed in hindlimb stylopod muscle and 125 other cell types or tissues"/>
</dbReference>
<dbReference type="ExpressionAtlas" id="P31415">
    <property type="expression patterns" value="baseline and differential"/>
</dbReference>
<dbReference type="GO" id="GO:0005783">
    <property type="term" value="C:endoplasmic reticulum"/>
    <property type="evidence" value="ECO:0000314"/>
    <property type="project" value="UniProtKB"/>
</dbReference>
<dbReference type="GO" id="GO:0005759">
    <property type="term" value="C:mitochondrial matrix"/>
    <property type="evidence" value="ECO:0000250"/>
    <property type="project" value="UniProtKB"/>
</dbReference>
<dbReference type="GO" id="GO:0005739">
    <property type="term" value="C:mitochondrion"/>
    <property type="evidence" value="ECO:0007005"/>
    <property type="project" value="UniProtKB"/>
</dbReference>
<dbReference type="GO" id="GO:0016529">
    <property type="term" value="C:sarcoplasmic reticulum"/>
    <property type="evidence" value="ECO:0000250"/>
    <property type="project" value="UniProtKB"/>
</dbReference>
<dbReference type="GO" id="GO:0033018">
    <property type="term" value="C:sarcoplasmic reticulum lumen"/>
    <property type="evidence" value="ECO:0000250"/>
    <property type="project" value="UniProtKB"/>
</dbReference>
<dbReference type="GO" id="GO:0033017">
    <property type="term" value="C:sarcoplasmic reticulum membrane"/>
    <property type="evidence" value="ECO:0000304"/>
    <property type="project" value="Reactome"/>
</dbReference>
<dbReference type="GO" id="GO:0005790">
    <property type="term" value="C:smooth endoplasmic reticulum"/>
    <property type="evidence" value="ECO:0000304"/>
    <property type="project" value="ProtInc"/>
</dbReference>
<dbReference type="GO" id="GO:0030315">
    <property type="term" value="C:T-tubule"/>
    <property type="evidence" value="ECO:0007669"/>
    <property type="project" value="Ensembl"/>
</dbReference>
<dbReference type="GO" id="GO:0014804">
    <property type="term" value="C:terminal cisterna lumen"/>
    <property type="evidence" value="ECO:0007669"/>
    <property type="project" value="Ensembl"/>
</dbReference>
<dbReference type="GO" id="GO:0030018">
    <property type="term" value="C:Z disc"/>
    <property type="evidence" value="ECO:0000318"/>
    <property type="project" value="GO_Central"/>
</dbReference>
<dbReference type="GO" id="GO:0005509">
    <property type="term" value="F:calcium ion binding"/>
    <property type="evidence" value="ECO:0000314"/>
    <property type="project" value="UniProtKB"/>
</dbReference>
<dbReference type="GO" id="GO:0042802">
    <property type="term" value="F:identical protein binding"/>
    <property type="evidence" value="ECO:0000314"/>
    <property type="project" value="UniProtKB"/>
</dbReference>
<dbReference type="GO" id="GO:0007029">
    <property type="term" value="P:endoplasmic reticulum organization"/>
    <property type="evidence" value="ECO:0007669"/>
    <property type="project" value="Ensembl"/>
</dbReference>
<dbReference type="GO" id="GO:0051281">
    <property type="term" value="P:positive regulation of release of sequestered calcium ion into cytosol"/>
    <property type="evidence" value="ECO:0000315"/>
    <property type="project" value="UniProtKB"/>
</dbReference>
<dbReference type="GO" id="GO:1901341">
    <property type="term" value="P:positive regulation of store-operated calcium channel activity"/>
    <property type="evidence" value="ECO:0000315"/>
    <property type="project" value="UniProtKB"/>
</dbReference>
<dbReference type="GO" id="GO:0051258">
    <property type="term" value="P:protein polymerization"/>
    <property type="evidence" value="ECO:0000314"/>
    <property type="project" value="UniProtKB"/>
</dbReference>
<dbReference type="GO" id="GO:0014809">
    <property type="term" value="P:regulation of skeletal muscle contraction by regulation of release of sequestered calcium ion"/>
    <property type="evidence" value="ECO:0000250"/>
    <property type="project" value="UniProtKB"/>
</dbReference>
<dbReference type="GO" id="GO:2001256">
    <property type="term" value="P:regulation of store-operated calcium entry"/>
    <property type="evidence" value="ECO:0000315"/>
    <property type="project" value="UniProtKB"/>
</dbReference>
<dbReference type="GO" id="GO:0014894">
    <property type="term" value="P:response to denervation involved in regulation of muscle adaptation"/>
    <property type="evidence" value="ECO:0007669"/>
    <property type="project" value="Ensembl"/>
</dbReference>
<dbReference type="GO" id="GO:0009408">
    <property type="term" value="P:response to heat"/>
    <property type="evidence" value="ECO:0007669"/>
    <property type="project" value="Ensembl"/>
</dbReference>
<dbReference type="GO" id="GO:0045214">
    <property type="term" value="P:sarcomere organization"/>
    <property type="evidence" value="ECO:0000250"/>
    <property type="project" value="UniProtKB"/>
</dbReference>
<dbReference type="GO" id="GO:0007519">
    <property type="term" value="P:skeletal muscle tissue development"/>
    <property type="evidence" value="ECO:0007669"/>
    <property type="project" value="Ensembl"/>
</dbReference>
<dbReference type="CDD" id="cd03074">
    <property type="entry name" value="PDI_b'_Calsequestrin_C"/>
    <property type="match status" value="1"/>
</dbReference>
<dbReference type="CDD" id="cd03066">
    <property type="entry name" value="PDI_b_Calsequestrin_middle"/>
    <property type="match status" value="1"/>
</dbReference>
<dbReference type="CDD" id="cd03065">
    <property type="entry name" value="PDI_b_Calsequestrin_N"/>
    <property type="match status" value="1"/>
</dbReference>
<dbReference type="FunFam" id="3.40.30.10:FF:000031">
    <property type="entry name" value="Calsequestrin"/>
    <property type="match status" value="1"/>
</dbReference>
<dbReference type="FunFam" id="3.40.30.10:FF:000033">
    <property type="entry name" value="Calsequestrin"/>
    <property type="match status" value="1"/>
</dbReference>
<dbReference type="FunFam" id="3.40.30.10:FF:000047">
    <property type="entry name" value="Calsequestrin"/>
    <property type="match status" value="1"/>
</dbReference>
<dbReference type="Gene3D" id="3.40.30.10">
    <property type="entry name" value="Glutaredoxin"/>
    <property type="match status" value="3"/>
</dbReference>
<dbReference type="InterPro" id="IPR001393">
    <property type="entry name" value="Calsequestrin"/>
</dbReference>
<dbReference type="InterPro" id="IPR041860">
    <property type="entry name" value="Calsequestrin_C"/>
</dbReference>
<dbReference type="InterPro" id="IPR018233">
    <property type="entry name" value="Calsequestrin_CS"/>
</dbReference>
<dbReference type="InterPro" id="IPR041858">
    <property type="entry name" value="Calsequestrin_middle_dom"/>
</dbReference>
<dbReference type="InterPro" id="IPR041859">
    <property type="entry name" value="Calsequestrin_N"/>
</dbReference>
<dbReference type="InterPro" id="IPR036249">
    <property type="entry name" value="Thioredoxin-like_sf"/>
</dbReference>
<dbReference type="PANTHER" id="PTHR10033">
    <property type="entry name" value="CALSEQUESTRIN"/>
    <property type="match status" value="1"/>
</dbReference>
<dbReference type="PANTHER" id="PTHR10033:SF14">
    <property type="entry name" value="CALSEQUESTRIN-1"/>
    <property type="match status" value="1"/>
</dbReference>
<dbReference type="Pfam" id="PF01216">
    <property type="entry name" value="Calsequestrin"/>
    <property type="match status" value="1"/>
</dbReference>
<dbReference type="PRINTS" id="PR00312">
    <property type="entry name" value="CALSEQUESTRN"/>
</dbReference>
<dbReference type="SUPFAM" id="SSF52833">
    <property type="entry name" value="Thioredoxin-like"/>
    <property type="match status" value="3"/>
</dbReference>
<dbReference type="PROSITE" id="PS00863">
    <property type="entry name" value="CALSEQUESTRIN_1"/>
    <property type="match status" value="1"/>
</dbReference>
<dbReference type="PROSITE" id="PS00864">
    <property type="entry name" value="CALSEQUESTRIN_2"/>
    <property type="match status" value="1"/>
</dbReference>